<proteinExistence type="inferred from homology"/>
<keyword id="KW-0963">Cytoplasm</keyword>
<keyword id="KW-0350">Heme biosynthesis</keyword>
<keyword id="KW-0479">Metal-binding</keyword>
<keyword id="KW-0560">Oxidoreductase</keyword>
<keyword id="KW-0627">Porphyrin biosynthesis</keyword>
<comment type="function">
    <text evidence="1">Involved in the heme biosynthesis. Catalyzes the aerobic oxidative decarboxylation of propionate groups of rings A and B of coproporphyrinogen-III to yield the vinyl groups in protoporphyrinogen-IX.</text>
</comment>
<comment type="catalytic activity">
    <reaction evidence="1">
        <text>coproporphyrinogen III + O2 + 2 H(+) = protoporphyrinogen IX + 2 CO2 + 2 H2O</text>
        <dbReference type="Rhea" id="RHEA:18257"/>
        <dbReference type="ChEBI" id="CHEBI:15377"/>
        <dbReference type="ChEBI" id="CHEBI:15378"/>
        <dbReference type="ChEBI" id="CHEBI:15379"/>
        <dbReference type="ChEBI" id="CHEBI:16526"/>
        <dbReference type="ChEBI" id="CHEBI:57307"/>
        <dbReference type="ChEBI" id="CHEBI:57309"/>
        <dbReference type="EC" id="1.3.3.3"/>
    </reaction>
</comment>
<comment type="cofactor">
    <cofactor evidence="1">
        <name>a divalent metal cation</name>
        <dbReference type="ChEBI" id="CHEBI:60240"/>
    </cofactor>
</comment>
<comment type="pathway">
    <text evidence="1">Porphyrin-containing compound metabolism; protoporphyrin-IX biosynthesis; protoporphyrinogen-IX from coproporphyrinogen-III (O2 route): step 1/1.</text>
</comment>
<comment type="subunit">
    <text evidence="1">Homodimer.</text>
</comment>
<comment type="subcellular location">
    <subcellularLocation>
        <location evidence="1">Cytoplasm</location>
    </subcellularLocation>
</comment>
<comment type="similarity">
    <text evidence="1">Belongs to the aerobic coproporphyrinogen-III oxidase family.</text>
</comment>
<dbReference type="EC" id="1.3.3.3" evidence="1"/>
<dbReference type="EMBL" id="CT573326">
    <property type="protein sequence ID" value="CAK13024.1"/>
    <property type="molecule type" value="Genomic_DNA"/>
</dbReference>
<dbReference type="RefSeq" id="WP_011531485.1">
    <property type="nucleotide sequence ID" value="NC_008027.1"/>
</dbReference>
<dbReference type="SMR" id="Q1I2G6"/>
<dbReference type="STRING" id="384676.PSEEN0030"/>
<dbReference type="GeneID" id="32803398"/>
<dbReference type="KEGG" id="pen:PSEEN0030"/>
<dbReference type="eggNOG" id="COG0408">
    <property type="taxonomic scope" value="Bacteria"/>
</dbReference>
<dbReference type="HOGENOM" id="CLU_026169_0_1_6"/>
<dbReference type="OrthoDB" id="9777553at2"/>
<dbReference type="UniPathway" id="UPA00251">
    <property type="reaction ID" value="UER00322"/>
</dbReference>
<dbReference type="Proteomes" id="UP000000658">
    <property type="component" value="Chromosome"/>
</dbReference>
<dbReference type="GO" id="GO:0005737">
    <property type="term" value="C:cytoplasm"/>
    <property type="evidence" value="ECO:0007669"/>
    <property type="project" value="UniProtKB-SubCell"/>
</dbReference>
<dbReference type="GO" id="GO:0004109">
    <property type="term" value="F:coproporphyrinogen oxidase activity"/>
    <property type="evidence" value="ECO:0007669"/>
    <property type="project" value="UniProtKB-UniRule"/>
</dbReference>
<dbReference type="GO" id="GO:0046872">
    <property type="term" value="F:metal ion binding"/>
    <property type="evidence" value="ECO:0007669"/>
    <property type="project" value="UniProtKB-KW"/>
</dbReference>
<dbReference type="GO" id="GO:0042803">
    <property type="term" value="F:protein homodimerization activity"/>
    <property type="evidence" value="ECO:0000250"/>
    <property type="project" value="UniProtKB"/>
</dbReference>
<dbReference type="GO" id="GO:0006782">
    <property type="term" value="P:protoporphyrinogen IX biosynthetic process"/>
    <property type="evidence" value="ECO:0007669"/>
    <property type="project" value="UniProtKB-UniRule"/>
</dbReference>
<dbReference type="FunFam" id="3.40.1500.10:FF:000001">
    <property type="entry name" value="Oxygen-dependent coproporphyrinogen-III oxidase"/>
    <property type="match status" value="1"/>
</dbReference>
<dbReference type="Gene3D" id="3.40.1500.10">
    <property type="entry name" value="Coproporphyrinogen III oxidase, aerobic"/>
    <property type="match status" value="1"/>
</dbReference>
<dbReference type="HAMAP" id="MF_00333">
    <property type="entry name" value="Coprogen_oxidas"/>
    <property type="match status" value="1"/>
</dbReference>
<dbReference type="InterPro" id="IPR001260">
    <property type="entry name" value="Coprogen_oxidase_aer"/>
</dbReference>
<dbReference type="InterPro" id="IPR036406">
    <property type="entry name" value="Coprogen_oxidase_aer_sf"/>
</dbReference>
<dbReference type="InterPro" id="IPR018375">
    <property type="entry name" value="Coprogen_oxidase_CS"/>
</dbReference>
<dbReference type="NCBIfam" id="NF003727">
    <property type="entry name" value="PRK05330.1"/>
    <property type="match status" value="1"/>
</dbReference>
<dbReference type="PANTHER" id="PTHR10755">
    <property type="entry name" value="COPROPORPHYRINOGEN III OXIDASE, MITOCHONDRIAL"/>
    <property type="match status" value="1"/>
</dbReference>
<dbReference type="PANTHER" id="PTHR10755:SF0">
    <property type="entry name" value="OXYGEN-DEPENDENT COPROPORPHYRINOGEN-III OXIDASE, MITOCHONDRIAL"/>
    <property type="match status" value="1"/>
</dbReference>
<dbReference type="Pfam" id="PF01218">
    <property type="entry name" value="Coprogen_oxidas"/>
    <property type="match status" value="1"/>
</dbReference>
<dbReference type="PIRSF" id="PIRSF000166">
    <property type="entry name" value="Coproporphyri_ox"/>
    <property type="match status" value="1"/>
</dbReference>
<dbReference type="PRINTS" id="PR00073">
    <property type="entry name" value="COPRGNOXDASE"/>
</dbReference>
<dbReference type="SUPFAM" id="SSF102886">
    <property type="entry name" value="Coproporphyrinogen III oxidase"/>
    <property type="match status" value="1"/>
</dbReference>
<dbReference type="PROSITE" id="PS01021">
    <property type="entry name" value="COPROGEN_OXIDASE"/>
    <property type="match status" value="1"/>
</dbReference>
<evidence type="ECO:0000255" key="1">
    <source>
        <dbReference type="HAMAP-Rule" id="MF_00333"/>
    </source>
</evidence>
<feature type="chain" id="PRO_1000019485" description="Oxygen-dependent coproporphyrinogen-III oxidase">
    <location>
        <begin position="1"/>
        <end position="303"/>
    </location>
</feature>
<feature type="region of interest" description="Important for dimerization" evidence="1">
    <location>
        <begin position="241"/>
        <end position="276"/>
    </location>
</feature>
<feature type="active site" description="Proton donor" evidence="1">
    <location>
        <position position="107"/>
    </location>
</feature>
<feature type="binding site" evidence="1">
    <location>
        <position position="93"/>
    </location>
    <ligand>
        <name>substrate</name>
    </ligand>
</feature>
<feature type="binding site" evidence="1">
    <location>
        <position position="97"/>
    </location>
    <ligand>
        <name>a divalent metal cation</name>
        <dbReference type="ChEBI" id="CHEBI:60240"/>
    </ligand>
</feature>
<feature type="binding site" evidence="1">
    <location>
        <position position="107"/>
    </location>
    <ligand>
        <name>a divalent metal cation</name>
        <dbReference type="ChEBI" id="CHEBI:60240"/>
    </ligand>
</feature>
<feature type="binding site" evidence="1">
    <location>
        <begin position="109"/>
        <end position="111"/>
    </location>
    <ligand>
        <name>substrate</name>
    </ligand>
</feature>
<feature type="binding site" evidence="1">
    <location>
        <position position="146"/>
    </location>
    <ligand>
        <name>a divalent metal cation</name>
        <dbReference type="ChEBI" id="CHEBI:60240"/>
    </ligand>
</feature>
<feature type="binding site" evidence="1">
    <location>
        <position position="176"/>
    </location>
    <ligand>
        <name>a divalent metal cation</name>
        <dbReference type="ChEBI" id="CHEBI:60240"/>
    </ligand>
</feature>
<feature type="binding site" evidence="1">
    <location>
        <begin position="259"/>
        <end position="261"/>
    </location>
    <ligand>
        <name>substrate</name>
    </ligand>
</feature>
<feature type="site" description="Important for dimerization" evidence="1">
    <location>
        <position position="176"/>
    </location>
</feature>
<sequence>MTSRTEAVKAYLLDLQDRICSALETEDGGARFVEDAWVRDAGGGGRTRVIGEGKVIEKGGVNFSHVFGAGLPPSASAHRPELAGRGFEALGVSLVIHPHNPHVPTSHANVRFFIAEKEGEEAVWWFGGGFDLTPYYGNEEDCVHWHRVAEQACAPFGADVYPRYKAWCDRYFHLKHRGEPRGIGGLFFDDLNEWDFDTCFAFMRAIGDAYVDAYLPIIQRRKDTPYTAKQREFQEYRRGRYVEFNLVYDRGTLFGLQSGGRTESILMSLPPQVRWGYDWKAEPGSEEARLTDYFLQDRDWLAQ</sequence>
<protein>
    <recommendedName>
        <fullName evidence="1">Oxygen-dependent coproporphyrinogen-III oxidase</fullName>
        <shortName evidence="1">CPO</shortName>
        <shortName evidence="1">Coprogen oxidase</shortName>
        <shortName evidence="1">Coproporphyrinogenase</shortName>
        <ecNumber evidence="1">1.3.3.3</ecNumber>
    </recommendedName>
</protein>
<organism>
    <name type="scientific">Pseudomonas entomophila (strain L48)</name>
    <dbReference type="NCBI Taxonomy" id="384676"/>
    <lineage>
        <taxon>Bacteria</taxon>
        <taxon>Pseudomonadati</taxon>
        <taxon>Pseudomonadota</taxon>
        <taxon>Gammaproteobacteria</taxon>
        <taxon>Pseudomonadales</taxon>
        <taxon>Pseudomonadaceae</taxon>
        <taxon>Pseudomonas</taxon>
    </lineage>
</organism>
<accession>Q1I2G6</accession>
<gene>
    <name evidence="1" type="primary">hemF</name>
    <name type="ordered locus">PSEEN0030</name>
</gene>
<reference key="1">
    <citation type="journal article" date="2006" name="Nat. Biotechnol.">
        <title>Complete genome sequence of the entomopathogenic and metabolically versatile soil bacterium Pseudomonas entomophila.</title>
        <authorList>
            <person name="Vodovar N."/>
            <person name="Vallenet D."/>
            <person name="Cruveiller S."/>
            <person name="Rouy Z."/>
            <person name="Barbe V."/>
            <person name="Acosta C."/>
            <person name="Cattolico L."/>
            <person name="Jubin C."/>
            <person name="Lajus A."/>
            <person name="Segurens B."/>
            <person name="Vacherie B."/>
            <person name="Wincker P."/>
            <person name="Weissenbach J."/>
            <person name="Lemaitre B."/>
            <person name="Medigue C."/>
            <person name="Boccard F."/>
        </authorList>
    </citation>
    <scope>NUCLEOTIDE SEQUENCE [LARGE SCALE GENOMIC DNA]</scope>
    <source>
        <strain>L48</strain>
    </source>
</reference>
<name>HEM6_PSEE4</name>